<protein>
    <recommendedName>
        <fullName>Probable low-affinity inorganic phosphate transporter</fullName>
    </recommendedName>
</protein>
<feature type="chain" id="PRO_0000428040" description="Probable low-affinity inorganic phosphate transporter">
    <location>
        <begin position="1"/>
        <end position="417"/>
    </location>
</feature>
<feature type="transmembrane region" description="Helical" evidence="2">
    <location>
        <begin position="5"/>
        <end position="25"/>
    </location>
</feature>
<feature type="transmembrane region" description="Helical" evidence="2">
    <location>
        <begin position="44"/>
        <end position="64"/>
    </location>
</feature>
<feature type="transmembrane region" description="Helical" evidence="2">
    <location>
        <begin position="81"/>
        <end position="101"/>
    </location>
</feature>
<feature type="transmembrane region" description="Helical" evidence="2">
    <location>
        <begin position="108"/>
        <end position="128"/>
    </location>
</feature>
<feature type="transmembrane region" description="Helical" evidence="2">
    <location>
        <begin position="135"/>
        <end position="155"/>
    </location>
</feature>
<feature type="transmembrane region" description="Helical" evidence="2">
    <location>
        <begin position="218"/>
        <end position="238"/>
    </location>
</feature>
<feature type="transmembrane region" description="Helical" evidence="2">
    <location>
        <begin position="327"/>
        <end position="347"/>
    </location>
</feature>
<feature type="region of interest" description="Disordered" evidence="3">
    <location>
        <begin position="379"/>
        <end position="417"/>
    </location>
</feature>
<feature type="compositionally biased region" description="Pro residues" evidence="3">
    <location>
        <begin position="390"/>
        <end position="404"/>
    </location>
</feature>
<organism>
    <name type="scientific">Mycobacterium tuberculosis (strain CDC 1551 / Oshkosh)</name>
    <dbReference type="NCBI Taxonomy" id="83331"/>
    <lineage>
        <taxon>Bacteria</taxon>
        <taxon>Bacillati</taxon>
        <taxon>Actinomycetota</taxon>
        <taxon>Actinomycetes</taxon>
        <taxon>Mycobacteriales</taxon>
        <taxon>Mycobacteriaceae</taxon>
        <taxon>Mycobacterium</taxon>
        <taxon>Mycobacterium tuberculosis complex</taxon>
    </lineage>
</organism>
<evidence type="ECO:0000250" key="1">
    <source>
        <dbReference type="UniProtKB" id="P0AFJ7"/>
    </source>
</evidence>
<evidence type="ECO:0000255" key="2"/>
<evidence type="ECO:0000256" key="3">
    <source>
        <dbReference type="SAM" id="MobiDB-lite"/>
    </source>
</evidence>
<evidence type="ECO:0000305" key="4"/>
<accession>P9WIA6</accession>
<accession>L0T6T9</accession>
<accession>O06411</accession>
<sequence>MNLQLFLLLIVVVTALAFDFTNGFHDTGNAMATSIASGALAPRVAVALSAVLNLIGAFLSTAVAATIAKGLIDANLVTLELVFAGLVGGIVWNLLTWLLGIPSSSSHALIGGIVGATIAAVGLRGVIWSGVVSKVIVPAVVAALLATLVGAVGTWLVYRTTRGVAEKRTERGFRRGQIGSASLVSLAHGTNDAQKTMGVIFLALMSYGAVSTTASVPPLWVIVSCAVAMAAGTYLGGWRIIRTLGKGLVEIKPPQGMAAESSSAAVILLSAHFGYALSTTQVATGSVLGSGVGKPGAEVRWGVAGRMVVAWLVTLPLAGLVGAFTYGLVHFIGGYPGAILGFALLWLTATAIWLRSRRAPIDHTNVNADWEGNLTAGLEAGAQPLADQRPPVPAPPAPTPPPNHRAPQFGVTTRNAP</sequence>
<gene>
    <name type="primary">pit</name>
    <name type="synonym">pitA</name>
    <name type="ordered locus">MT0570</name>
</gene>
<keyword id="KW-1003">Cell membrane</keyword>
<keyword id="KW-0472">Membrane</keyword>
<keyword id="KW-0592">Phosphate transport</keyword>
<keyword id="KW-1185">Reference proteome</keyword>
<keyword id="KW-0769">Symport</keyword>
<keyword id="KW-0812">Transmembrane</keyword>
<keyword id="KW-1133">Transmembrane helix</keyword>
<keyword id="KW-0813">Transport</keyword>
<reference key="1">
    <citation type="journal article" date="2002" name="J. Bacteriol.">
        <title>Whole-genome comparison of Mycobacterium tuberculosis clinical and laboratory strains.</title>
        <authorList>
            <person name="Fleischmann R.D."/>
            <person name="Alland D."/>
            <person name="Eisen J.A."/>
            <person name="Carpenter L."/>
            <person name="White O."/>
            <person name="Peterson J.D."/>
            <person name="DeBoy R.T."/>
            <person name="Dodson R.J."/>
            <person name="Gwinn M.L."/>
            <person name="Haft D.H."/>
            <person name="Hickey E.K."/>
            <person name="Kolonay J.F."/>
            <person name="Nelson W.C."/>
            <person name="Umayam L.A."/>
            <person name="Ermolaeva M.D."/>
            <person name="Salzberg S.L."/>
            <person name="Delcher A."/>
            <person name="Utterback T.R."/>
            <person name="Weidman J.F."/>
            <person name="Khouri H.M."/>
            <person name="Gill J."/>
            <person name="Mikula A."/>
            <person name="Bishai W."/>
            <person name="Jacobs W.R. Jr."/>
            <person name="Venter J.C."/>
            <person name="Fraser C.M."/>
        </authorList>
    </citation>
    <scope>NUCLEOTIDE SEQUENCE [LARGE SCALE GENOMIC DNA]</scope>
    <source>
        <strain>CDC 1551 / Oshkosh</strain>
    </source>
</reference>
<proteinExistence type="inferred from homology"/>
<comment type="function">
    <text evidence="1">Low-affinity inorganic phosphate transporter.</text>
</comment>
<comment type="catalytic activity">
    <reaction evidence="1">
        <text>phosphate(in) + H(+)(in) = phosphate(out) + H(+)(out)</text>
        <dbReference type="Rhea" id="RHEA:29939"/>
        <dbReference type="ChEBI" id="CHEBI:15378"/>
        <dbReference type="ChEBI" id="CHEBI:43474"/>
    </reaction>
</comment>
<comment type="subcellular location">
    <subcellularLocation>
        <location evidence="4">Cell membrane</location>
        <topology evidence="2">Multi-pass membrane protein</topology>
    </subcellularLocation>
</comment>
<comment type="similarity">
    <text evidence="4">Belongs to the inorganic phosphate transporter (PiT) (TC 2.A.20) family. Pit subfamily.</text>
</comment>
<dbReference type="EMBL" id="AE000516">
    <property type="protein sequence ID" value="AAK44792.1"/>
    <property type="molecule type" value="Genomic_DNA"/>
</dbReference>
<dbReference type="PIR" id="D70547">
    <property type="entry name" value="D70547"/>
</dbReference>
<dbReference type="RefSeq" id="WP_003402904.1">
    <property type="nucleotide sequence ID" value="NZ_KK341227.1"/>
</dbReference>
<dbReference type="SMR" id="P9WIA6"/>
<dbReference type="KEGG" id="mtc:MT0570"/>
<dbReference type="PATRIC" id="fig|83331.31.peg.601"/>
<dbReference type="HOGENOM" id="CLU_015355_1_0_11"/>
<dbReference type="Proteomes" id="UP000001020">
    <property type="component" value="Chromosome"/>
</dbReference>
<dbReference type="GO" id="GO:0005886">
    <property type="term" value="C:plasma membrane"/>
    <property type="evidence" value="ECO:0007669"/>
    <property type="project" value="UniProtKB-SubCell"/>
</dbReference>
<dbReference type="GO" id="GO:0005315">
    <property type="term" value="F:phosphate transmembrane transporter activity"/>
    <property type="evidence" value="ECO:0007669"/>
    <property type="project" value="InterPro"/>
</dbReference>
<dbReference type="GO" id="GO:0015293">
    <property type="term" value="F:symporter activity"/>
    <property type="evidence" value="ECO:0007669"/>
    <property type="project" value="UniProtKB-KW"/>
</dbReference>
<dbReference type="GO" id="GO:0035435">
    <property type="term" value="P:phosphate ion transmembrane transport"/>
    <property type="evidence" value="ECO:0007669"/>
    <property type="project" value="TreeGrafter"/>
</dbReference>
<dbReference type="InterPro" id="IPR001204">
    <property type="entry name" value="Phos_transporter"/>
</dbReference>
<dbReference type="PANTHER" id="PTHR11101:SF54">
    <property type="entry name" value="LOW-AFFINITY INORGANIC PHOSPHATE TRANSPORTER-RELATED"/>
    <property type="match status" value="1"/>
</dbReference>
<dbReference type="PANTHER" id="PTHR11101">
    <property type="entry name" value="PHOSPHATE TRANSPORTER"/>
    <property type="match status" value="1"/>
</dbReference>
<dbReference type="Pfam" id="PF01384">
    <property type="entry name" value="PHO4"/>
    <property type="match status" value="1"/>
</dbReference>
<name>PIT_MYCTO</name>